<name>HIS3_PYRCJ</name>
<evidence type="ECO:0000255" key="1">
    <source>
        <dbReference type="HAMAP-Rule" id="MF_01021"/>
    </source>
</evidence>
<gene>
    <name evidence="1" type="primary">hisI</name>
    <name type="ordered locus">Pcal_0131</name>
</gene>
<protein>
    <recommendedName>
        <fullName evidence="1">Phosphoribosyl-AMP cyclohydrolase</fullName>
        <shortName evidence="1">PRA-CH</shortName>
        <ecNumber evidence="1">3.5.4.19</ecNumber>
    </recommendedName>
</protein>
<sequence length="128" mass="13959">MDAVPLATPEEAWRIAKSLNYRHIGGTVVAVVQDVETGEVLMVGHMDPVAVVLTLTTGLAHYYSTSRKRIWLKGETSGHYQIVKEFRTDCDGDAVVLKVVQIGAACHTGARSCFSSPASFKIRLNRDA</sequence>
<accession>A3MSF2</accession>
<proteinExistence type="inferred from homology"/>
<organism>
    <name type="scientific">Pyrobaculum calidifontis (strain DSM 21063 / JCM 11548 / VA1)</name>
    <dbReference type="NCBI Taxonomy" id="410359"/>
    <lineage>
        <taxon>Archaea</taxon>
        <taxon>Thermoproteota</taxon>
        <taxon>Thermoprotei</taxon>
        <taxon>Thermoproteales</taxon>
        <taxon>Thermoproteaceae</taxon>
        <taxon>Pyrobaculum</taxon>
    </lineage>
</organism>
<reference key="1">
    <citation type="submission" date="2007-02" db="EMBL/GenBank/DDBJ databases">
        <title>Complete sequence of Pyrobaculum calidifontis JCM 11548.</title>
        <authorList>
            <consortium name="US DOE Joint Genome Institute"/>
            <person name="Copeland A."/>
            <person name="Lucas S."/>
            <person name="Lapidus A."/>
            <person name="Barry K."/>
            <person name="Glavina del Rio T."/>
            <person name="Dalin E."/>
            <person name="Tice H."/>
            <person name="Pitluck S."/>
            <person name="Chain P."/>
            <person name="Malfatti S."/>
            <person name="Shin M."/>
            <person name="Vergez L."/>
            <person name="Schmutz J."/>
            <person name="Larimer F."/>
            <person name="Land M."/>
            <person name="Hauser L."/>
            <person name="Kyrpides N."/>
            <person name="Mikhailova N."/>
            <person name="Cozen A.E."/>
            <person name="Fitz-Gibbon S.T."/>
            <person name="House C.H."/>
            <person name="Saltikov C."/>
            <person name="Lowe T.M."/>
            <person name="Richardson P."/>
        </authorList>
    </citation>
    <scope>NUCLEOTIDE SEQUENCE [LARGE SCALE GENOMIC DNA]</scope>
    <source>
        <strain>DSM 21063 / JCM 11548 / VA1</strain>
    </source>
</reference>
<feature type="chain" id="PRO_1000063428" description="Phosphoribosyl-AMP cyclohydrolase">
    <location>
        <begin position="1"/>
        <end position="128"/>
    </location>
</feature>
<feature type="binding site" evidence="1">
    <location>
        <position position="89"/>
    </location>
    <ligand>
        <name>Mg(2+)</name>
        <dbReference type="ChEBI" id="CHEBI:18420"/>
    </ligand>
</feature>
<feature type="binding site" evidence="1">
    <location>
        <position position="90"/>
    </location>
    <ligand>
        <name>Zn(2+)</name>
        <dbReference type="ChEBI" id="CHEBI:29105"/>
        <note>ligand shared between dimeric partners</note>
    </ligand>
</feature>
<feature type="binding site" evidence="1">
    <location>
        <position position="91"/>
    </location>
    <ligand>
        <name>Mg(2+)</name>
        <dbReference type="ChEBI" id="CHEBI:18420"/>
    </ligand>
</feature>
<feature type="binding site" evidence="1">
    <location>
        <position position="93"/>
    </location>
    <ligand>
        <name>Mg(2+)</name>
        <dbReference type="ChEBI" id="CHEBI:18420"/>
    </ligand>
</feature>
<feature type="binding site" evidence="1">
    <location>
        <position position="106"/>
    </location>
    <ligand>
        <name>Zn(2+)</name>
        <dbReference type="ChEBI" id="CHEBI:29105"/>
        <note>ligand shared between dimeric partners</note>
    </ligand>
</feature>
<feature type="binding site" evidence="1">
    <location>
        <position position="113"/>
    </location>
    <ligand>
        <name>Zn(2+)</name>
        <dbReference type="ChEBI" id="CHEBI:29105"/>
        <note>ligand shared between dimeric partners</note>
    </ligand>
</feature>
<dbReference type="EC" id="3.5.4.19" evidence="1"/>
<dbReference type="EMBL" id="CP000561">
    <property type="protein sequence ID" value="ABO07569.1"/>
    <property type="molecule type" value="Genomic_DNA"/>
</dbReference>
<dbReference type="RefSeq" id="WP_011848826.1">
    <property type="nucleotide sequence ID" value="NC_009073.1"/>
</dbReference>
<dbReference type="SMR" id="A3MSF2"/>
<dbReference type="STRING" id="410359.Pcal_0131"/>
<dbReference type="GeneID" id="4908366"/>
<dbReference type="KEGG" id="pcl:Pcal_0131"/>
<dbReference type="eggNOG" id="arCOG02676">
    <property type="taxonomic scope" value="Archaea"/>
</dbReference>
<dbReference type="HOGENOM" id="CLU_048577_5_1_2"/>
<dbReference type="OrthoDB" id="5853at2157"/>
<dbReference type="UniPathway" id="UPA00031">
    <property type="reaction ID" value="UER00008"/>
</dbReference>
<dbReference type="Proteomes" id="UP000001431">
    <property type="component" value="Chromosome"/>
</dbReference>
<dbReference type="GO" id="GO:0005737">
    <property type="term" value="C:cytoplasm"/>
    <property type="evidence" value="ECO:0007669"/>
    <property type="project" value="UniProtKB-SubCell"/>
</dbReference>
<dbReference type="GO" id="GO:0000287">
    <property type="term" value="F:magnesium ion binding"/>
    <property type="evidence" value="ECO:0007669"/>
    <property type="project" value="UniProtKB-UniRule"/>
</dbReference>
<dbReference type="GO" id="GO:0004635">
    <property type="term" value="F:phosphoribosyl-AMP cyclohydrolase activity"/>
    <property type="evidence" value="ECO:0007669"/>
    <property type="project" value="UniProtKB-UniRule"/>
</dbReference>
<dbReference type="GO" id="GO:0008270">
    <property type="term" value="F:zinc ion binding"/>
    <property type="evidence" value="ECO:0007669"/>
    <property type="project" value="UniProtKB-UniRule"/>
</dbReference>
<dbReference type="GO" id="GO:0000105">
    <property type="term" value="P:L-histidine biosynthetic process"/>
    <property type="evidence" value="ECO:0007669"/>
    <property type="project" value="UniProtKB-UniRule"/>
</dbReference>
<dbReference type="FunFam" id="3.10.20.810:FF:000001">
    <property type="entry name" value="Histidine biosynthesis bifunctional protein HisIE"/>
    <property type="match status" value="1"/>
</dbReference>
<dbReference type="Gene3D" id="3.10.20.810">
    <property type="entry name" value="Phosphoribosyl-AMP cyclohydrolase"/>
    <property type="match status" value="1"/>
</dbReference>
<dbReference type="HAMAP" id="MF_01021">
    <property type="entry name" value="HisI"/>
    <property type="match status" value="1"/>
</dbReference>
<dbReference type="InterPro" id="IPR026660">
    <property type="entry name" value="PRA-CH"/>
</dbReference>
<dbReference type="InterPro" id="IPR002496">
    <property type="entry name" value="PRib_AMP_CycHydrolase_dom"/>
</dbReference>
<dbReference type="InterPro" id="IPR038019">
    <property type="entry name" value="PRib_AMP_CycHydrolase_sf"/>
</dbReference>
<dbReference type="NCBIfam" id="NF000768">
    <property type="entry name" value="PRK00051.1"/>
    <property type="match status" value="1"/>
</dbReference>
<dbReference type="PANTHER" id="PTHR42945">
    <property type="entry name" value="HISTIDINE BIOSYNTHESIS BIFUNCTIONAL PROTEIN"/>
    <property type="match status" value="1"/>
</dbReference>
<dbReference type="PANTHER" id="PTHR42945:SF1">
    <property type="entry name" value="HISTIDINE BIOSYNTHESIS BIFUNCTIONAL PROTEIN HIS7"/>
    <property type="match status" value="1"/>
</dbReference>
<dbReference type="Pfam" id="PF01502">
    <property type="entry name" value="PRA-CH"/>
    <property type="match status" value="1"/>
</dbReference>
<dbReference type="SUPFAM" id="SSF141734">
    <property type="entry name" value="HisI-like"/>
    <property type="match status" value="1"/>
</dbReference>
<comment type="function">
    <text evidence="1">Catalyzes the hydrolysis of the adenine ring of phosphoribosyl-AMP.</text>
</comment>
<comment type="catalytic activity">
    <reaction evidence="1">
        <text>1-(5-phospho-beta-D-ribosyl)-5'-AMP + H2O = 1-(5-phospho-beta-D-ribosyl)-5-[(5-phospho-beta-D-ribosylamino)methylideneamino]imidazole-4-carboxamide</text>
        <dbReference type="Rhea" id="RHEA:20049"/>
        <dbReference type="ChEBI" id="CHEBI:15377"/>
        <dbReference type="ChEBI" id="CHEBI:58435"/>
        <dbReference type="ChEBI" id="CHEBI:59457"/>
        <dbReference type="EC" id="3.5.4.19"/>
    </reaction>
</comment>
<comment type="cofactor">
    <cofactor evidence="1">
        <name>Mg(2+)</name>
        <dbReference type="ChEBI" id="CHEBI:18420"/>
    </cofactor>
    <text evidence="1">Binds 1 Mg(2+) ion per subunit.</text>
</comment>
<comment type="cofactor">
    <cofactor evidence="1">
        <name>Zn(2+)</name>
        <dbReference type="ChEBI" id="CHEBI:29105"/>
    </cofactor>
    <text evidence="1">Binds 1 zinc ion per subunit.</text>
</comment>
<comment type="pathway">
    <text evidence="1">Amino-acid biosynthesis; L-histidine biosynthesis; L-histidine from 5-phospho-alpha-D-ribose 1-diphosphate: step 3/9.</text>
</comment>
<comment type="subunit">
    <text evidence="1">Homodimer.</text>
</comment>
<comment type="subcellular location">
    <subcellularLocation>
        <location evidence="1">Cytoplasm</location>
    </subcellularLocation>
</comment>
<comment type="similarity">
    <text evidence="1">Belongs to the PRA-CH family.</text>
</comment>
<keyword id="KW-0028">Amino-acid biosynthesis</keyword>
<keyword id="KW-0963">Cytoplasm</keyword>
<keyword id="KW-0368">Histidine biosynthesis</keyword>
<keyword id="KW-0378">Hydrolase</keyword>
<keyword id="KW-0460">Magnesium</keyword>
<keyword id="KW-0479">Metal-binding</keyword>
<keyword id="KW-0862">Zinc</keyword>